<comment type="function">
    <text evidence="2">Plays a role in control of plant growth. Mediates specific degradation of cell wall (1,3)(1,4)-beta-D-glucans and is related to auxin-mediated growth and development of cereal coleoptiles.</text>
</comment>
<comment type="subcellular location">
    <subcellularLocation>
        <location>Secreted</location>
    </subcellularLocation>
</comment>
<comment type="PTM">
    <text>Glycosylated.</text>
</comment>
<accession>Q9ZT66</accession>
<organism>
    <name type="scientific">Zea mays</name>
    <name type="common">Maize</name>
    <dbReference type="NCBI Taxonomy" id="4577"/>
    <lineage>
        <taxon>Eukaryota</taxon>
        <taxon>Viridiplantae</taxon>
        <taxon>Streptophyta</taxon>
        <taxon>Embryophyta</taxon>
        <taxon>Tracheophyta</taxon>
        <taxon>Spermatophyta</taxon>
        <taxon>Magnoliopsida</taxon>
        <taxon>Liliopsida</taxon>
        <taxon>Poales</taxon>
        <taxon>Poaceae</taxon>
        <taxon>PACMAD clade</taxon>
        <taxon>Panicoideae</taxon>
        <taxon>Andropogonodae</taxon>
        <taxon>Andropogoneae</taxon>
        <taxon>Tripsacinae</taxon>
        <taxon>Zea</taxon>
    </lineage>
</organism>
<proteinExistence type="evidence at protein level"/>
<dbReference type="EC" id="3.2.1.-"/>
<dbReference type="EMBL" id="AF072326">
    <property type="protein sequence ID" value="AAC69757.1"/>
    <property type="molecule type" value="mRNA"/>
</dbReference>
<dbReference type="SMR" id="Q9ZT66"/>
<dbReference type="FunCoup" id="Q9ZT66">
    <property type="interactions" value="1294"/>
</dbReference>
<dbReference type="STRING" id="4577.Q9ZT66"/>
<dbReference type="ESTHER" id="maize-e134">
    <property type="family name" value="Dienelactone_hydrolase"/>
</dbReference>
<dbReference type="PaxDb" id="4577-GRMZM2G073079_P01"/>
<dbReference type="eggNOG" id="KOG3043">
    <property type="taxonomic scope" value="Eukaryota"/>
</dbReference>
<dbReference type="InParanoid" id="Q9ZT66"/>
<dbReference type="Proteomes" id="UP000007305">
    <property type="component" value="Unplaced"/>
</dbReference>
<dbReference type="ExpressionAtlas" id="Q9ZT66">
    <property type="expression patterns" value="baseline and differential"/>
</dbReference>
<dbReference type="GO" id="GO:0005576">
    <property type="term" value="C:extracellular region"/>
    <property type="evidence" value="ECO:0007669"/>
    <property type="project" value="UniProtKB-SubCell"/>
</dbReference>
<dbReference type="GO" id="GO:0016787">
    <property type="term" value="F:hydrolase activity"/>
    <property type="evidence" value="ECO:0007669"/>
    <property type="project" value="UniProtKB-KW"/>
</dbReference>
<dbReference type="Gene3D" id="3.40.50.1820">
    <property type="entry name" value="alpha/beta hydrolase"/>
    <property type="match status" value="1"/>
</dbReference>
<dbReference type="InterPro" id="IPR029058">
    <property type="entry name" value="AB_hydrolase_fold"/>
</dbReference>
<dbReference type="InterPro" id="IPR002925">
    <property type="entry name" value="Dienelactn_hydro"/>
</dbReference>
<dbReference type="PANTHER" id="PTHR17630">
    <property type="entry name" value="DIENELACTONE HYDROLASE"/>
    <property type="match status" value="1"/>
</dbReference>
<dbReference type="PANTHER" id="PTHR17630:SF56">
    <property type="entry name" value="ENDO-1,3_1,4-BETA-D-GLUCANASE"/>
    <property type="match status" value="1"/>
</dbReference>
<dbReference type="Pfam" id="PF01738">
    <property type="entry name" value="DLH"/>
    <property type="match status" value="1"/>
</dbReference>
<dbReference type="SUPFAM" id="SSF53474">
    <property type="entry name" value="alpha/beta-Hydrolases"/>
    <property type="match status" value="1"/>
</dbReference>
<feature type="signal peptide" evidence="3">
    <location>
        <begin position="1"/>
        <end position="43"/>
    </location>
</feature>
<feature type="chain" id="PRO_0000008038" description="Endo-1,3;1,4-beta-D-glucanase">
    <location>
        <begin position="44"/>
        <end position="303"/>
    </location>
</feature>
<feature type="glycosylation site" description="N-linked (GlcNAc...) asparagine" evidence="1">
    <location>
        <position position="115"/>
    </location>
</feature>
<feature type="glycosylation site" description="N-linked (GlcNAc...) asparagine" evidence="1">
    <location>
        <position position="197"/>
    </location>
</feature>
<feature type="glycosylation site" description="N-linked (GlcNAc...) asparagine" evidence="1">
    <location>
        <position position="257"/>
    </location>
</feature>
<keyword id="KW-0903">Direct protein sequencing</keyword>
<keyword id="KW-0325">Glycoprotein</keyword>
<keyword id="KW-0378">Hydrolase</keyword>
<keyword id="KW-1185">Reference proteome</keyword>
<keyword id="KW-0964">Secreted</keyword>
<keyword id="KW-0732">Signal</keyword>
<name>E134_MAIZE</name>
<sequence length="303" mass="33160">MPSSAQVLLCLAAVLAAAAATTAEAHSQCLDNPPDRSIHGRQLAEAGEVVHDLPGGLRAYVSGAASSSRAVVLASDVFGYEAPLLRQIVDKVAKAGYFVVVPDFLKGDYLDDKKNFTEWLEAHSPVKAAEDAKPLFAALKKEGKSVAVGGYCWGGKLSVEVGKTSDVKAVCLSHPYSVTADDMKEVKWPIEILGAQNDTTTPPKEVYRFVHVLRERHEVPFRRQDRRDGPRLHGQLVQQAPQLNEACTAPTRLNSINHSSAVIFCFDSWLPRLIFMATTSSTTVISLIFFVSMYFFSFLFAFL</sequence>
<protein>
    <recommendedName>
        <fullName>Endo-1,3;1,4-beta-D-glucanase</fullName>
        <ecNumber>3.2.1.-</ecNumber>
    </recommendedName>
</protein>
<reference key="1">
    <citation type="online journal article" date="1998" name="Plant Gene Register">
        <title>Maize coleoptile endoglucanase is encoded by a novel gene family.</title>
        <authorList>
            <person name="Thomas B.R."/>
            <person name="Simmons C."/>
            <person name="Inouhe M."/>
            <person name="Nevins D.J."/>
        </authorList>
        <locator>PGR98-143</locator>
    </citation>
    <scope>NUCLEOTIDE SEQUENCE [MRNA]</scope>
    <source>
        <strain>cv. A632</strain>
        <tissue>Coleoptile</tissue>
    </source>
</reference>
<reference key="2">
    <citation type="journal article" date="1999" name="J. Plant Physiol.">
        <title>Polypeptide characteristics and immunological properties of exo- and endoglucanases purified from maize coleoptile cell walls.</title>
        <authorList>
            <person name="Inouhe M."/>
            <person name="Hayashi K."/>
            <person name="Nevins D.J."/>
        </authorList>
    </citation>
    <scope>PROTEIN SEQUENCE OF N-TERMINUS</scope>
    <scope>CHARACTERIZATION</scope>
    <source>
        <strain>cv. A632</strain>
        <tissue>Coleoptile</tissue>
    </source>
</reference>
<reference key="3">
    <citation type="journal article" date="2000" name="Int. J. Biol. Macromol.">
        <title>Endo-1,3;1,4-beta-glucanase from coleoptiles of rice and maize: role in the regulation of plant growth.</title>
        <authorList>
            <person name="Thomas B.R."/>
            <person name="Inouhe M."/>
            <person name="Simmons C.R."/>
            <person name="Nevins D.J."/>
        </authorList>
    </citation>
    <scope>FUNCTION</scope>
    <source>
        <tissue>Coleoptile</tissue>
    </source>
</reference>
<evidence type="ECO:0000255" key="1"/>
<evidence type="ECO:0000269" key="2">
    <source>
    </source>
</evidence>
<evidence type="ECO:0000269" key="3">
    <source ref="2"/>
</evidence>